<reference key="1">
    <citation type="submission" date="2006-12" db="EMBL/GenBank/DDBJ databases">
        <title>Complete sequence of Shewanella amazonensis SB2B.</title>
        <authorList>
            <consortium name="US DOE Joint Genome Institute"/>
            <person name="Copeland A."/>
            <person name="Lucas S."/>
            <person name="Lapidus A."/>
            <person name="Barry K."/>
            <person name="Detter J.C."/>
            <person name="Glavina del Rio T."/>
            <person name="Hammon N."/>
            <person name="Israni S."/>
            <person name="Dalin E."/>
            <person name="Tice H."/>
            <person name="Pitluck S."/>
            <person name="Munk A.C."/>
            <person name="Brettin T."/>
            <person name="Bruce D."/>
            <person name="Han C."/>
            <person name="Tapia R."/>
            <person name="Gilna P."/>
            <person name="Schmutz J."/>
            <person name="Larimer F."/>
            <person name="Land M."/>
            <person name="Hauser L."/>
            <person name="Kyrpides N."/>
            <person name="Mikhailova N."/>
            <person name="Fredrickson J."/>
            <person name="Richardson P."/>
        </authorList>
    </citation>
    <scope>NUCLEOTIDE SEQUENCE [LARGE SCALE GENOMIC DNA]</scope>
    <source>
        <strain>ATCC BAA-1098 / SB2B</strain>
    </source>
</reference>
<proteinExistence type="inferred from homology"/>
<protein>
    <recommendedName>
        <fullName evidence="1">DNA-directed RNA polymerase subunit beta'</fullName>
        <shortName evidence="1">RNAP subunit beta'</shortName>
        <ecNumber evidence="1">2.7.7.6</ecNumber>
    </recommendedName>
    <alternativeName>
        <fullName evidence="1">RNA polymerase subunit beta'</fullName>
    </alternativeName>
    <alternativeName>
        <fullName evidence="1">Transcriptase subunit beta'</fullName>
    </alternativeName>
</protein>
<keyword id="KW-0240">DNA-directed RNA polymerase</keyword>
<keyword id="KW-0460">Magnesium</keyword>
<keyword id="KW-0479">Metal-binding</keyword>
<keyword id="KW-0548">Nucleotidyltransferase</keyword>
<keyword id="KW-1185">Reference proteome</keyword>
<keyword id="KW-0804">Transcription</keyword>
<keyword id="KW-0808">Transferase</keyword>
<keyword id="KW-0862">Zinc</keyword>
<dbReference type="EC" id="2.7.7.6" evidence="1"/>
<dbReference type="EMBL" id="CP000507">
    <property type="protein sequence ID" value="ABL98418.1"/>
    <property type="molecule type" value="Genomic_DNA"/>
</dbReference>
<dbReference type="RefSeq" id="WP_011758329.1">
    <property type="nucleotide sequence ID" value="NC_008700.1"/>
</dbReference>
<dbReference type="SMR" id="A1S212"/>
<dbReference type="STRING" id="326297.Sama_0207"/>
<dbReference type="KEGG" id="saz:Sama_0207"/>
<dbReference type="eggNOG" id="COG0086">
    <property type="taxonomic scope" value="Bacteria"/>
</dbReference>
<dbReference type="HOGENOM" id="CLU_000524_3_1_6"/>
<dbReference type="OrthoDB" id="9815296at2"/>
<dbReference type="Proteomes" id="UP000009175">
    <property type="component" value="Chromosome"/>
</dbReference>
<dbReference type="GO" id="GO:0000428">
    <property type="term" value="C:DNA-directed RNA polymerase complex"/>
    <property type="evidence" value="ECO:0007669"/>
    <property type="project" value="UniProtKB-KW"/>
</dbReference>
<dbReference type="GO" id="GO:0003677">
    <property type="term" value="F:DNA binding"/>
    <property type="evidence" value="ECO:0007669"/>
    <property type="project" value="UniProtKB-UniRule"/>
</dbReference>
<dbReference type="GO" id="GO:0003899">
    <property type="term" value="F:DNA-directed RNA polymerase activity"/>
    <property type="evidence" value="ECO:0007669"/>
    <property type="project" value="UniProtKB-UniRule"/>
</dbReference>
<dbReference type="GO" id="GO:0000287">
    <property type="term" value="F:magnesium ion binding"/>
    <property type="evidence" value="ECO:0007669"/>
    <property type="project" value="UniProtKB-UniRule"/>
</dbReference>
<dbReference type="GO" id="GO:0008270">
    <property type="term" value="F:zinc ion binding"/>
    <property type="evidence" value="ECO:0007669"/>
    <property type="project" value="UniProtKB-UniRule"/>
</dbReference>
<dbReference type="GO" id="GO:0006351">
    <property type="term" value="P:DNA-templated transcription"/>
    <property type="evidence" value="ECO:0007669"/>
    <property type="project" value="UniProtKB-UniRule"/>
</dbReference>
<dbReference type="CDD" id="cd02655">
    <property type="entry name" value="RNAP_beta'_C"/>
    <property type="match status" value="1"/>
</dbReference>
<dbReference type="CDD" id="cd01609">
    <property type="entry name" value="RNAP_beta'_N"/>
    <property type="match status" value="1"/>
</dbReference>
<dbReference type="FunFam" id="1.10.132.30:FF:000003">
    <property type="entry name" value="DNA-directed RNA polymerase subunit beta"/>
    <property type="match status" value="1"/>
</dbReference>
<dbReference type="FunFam" id="1.10.150.390:FF:000002">
    <property type="entry name" value="DNA-directed RNA polymerase subunit beta"/>
    <property type="match status" value="1"/>
</dbReference>
<dbReference type="FunFam" id="1.10.40.90:FF:000001">
    <property type="entry name" value="DNA-directed RNA polymerase subunit beta"/>
    <property type="match status" value="1"/>
</dbReference>
<dbReference type="FunFam" id="4.10.860.120:FF:000001">
    <property type="entry name" value="DNA-directed RNA polymerase subunit beta"/>
    <property type="match status" value="1"/>
</dbReference>
<dbReference type="Gene3D" id="1.10.132.30">
    <property type="match status" value="1"/>
</dbReference>
<dbReference type="Gene3D" id="1.10.150.390">
    <property type="match status" value="1"/>
</dbReference>
<dbReference type="Gene3D" id="1.10.1790.20">
    <property type="match status" value="1"/>
</dbReference>
<dbReference type="Gene3D" id="1.10.40.90">
    <property type="match status" value="1"/>
</dbReference>
<dbReference type="Gene3D" id="2.40.40.20">
    <property type="match status" value="1"/>
</dbReference>
<dbReference type="Gene3D" id="2.40.50.100">
    <property type="match status" value="3"/>
</dbReference>
<dbReference type="Gene3D" id="4.10.860.120">
    <property type="entry name" value="RNA polymerase II, clamp domain"/>
    <property type="match status" value="1"/>
</dbReference>
<dbReference type="Gene3D" id="1.10.274.100">
    <property type="entry name" value="RNA polymerase Rpb1, domain 3"/>
    <property type="match status" value="1"/>
</dbReference>
<dbReference type="HAMAP" id="MF_01322">
    <property type="entry name" value="RNApol_bact_RpoC"/>
    <property type="match status" value="1"/>
</dbReference>
<dbReference type="InterPro" id="IPR045867">
    <property type="entry name" value="DNA-dir_RpoC_beta_prime"/>
</dbReference>
<dbReference type="InterPro" id="IPR012754">
    <property type="entry name" value="DNA-dir_RpoC_beta_prime_bact"/>
</dbReference>
<dbReference type="InterPro" id="IPR000722">
    <property type="entry name" value="RNA_pol_asu"/>
</dbReference>
<dbReference type="InterPro" id="IPR006592">
    <property type="entry name" value="RNA_pol_N"/>
</dbReference>
<dbReference type="InterPro" id="IPR007080">
    <property type="entry name" value="RNA_pol_Rpb1_1"/>
</dbReference>
<dbReference type="InterPro" id="IPR007066">
    <property type="entry name" value="RNA_pol_Rpb1_3"/>
</dbReference>
<dbReference type="InterPro" id="IPR042102">
    <property type="entry name" value="RNA_pol_Rpb1_3_sf"/>
</dbReference>
<dbReference type="InterPro" id="IPR007083">
    <property type="entry name" value="RNA_pol_Rpb1_4"/>
</dbReference>
<dbReference type="InterPro" id="IPR007081">
    <property type="entry name" value="RNA_pol_Rpb1_5"/>
</dbReference>
<dbReference type="InterPro" id="IPR044893">
    <property type="entry name" value="RNA_pol_Rpb1_clamp_domain"/>
</dbReference>
<dbReference type="InterPro" id="IPR038120">
    <property type="entry name" value="Rpb1_funnel_sf"/>
</dbReference>
<dbReference type="NCBIfam" id="TIGR02386">
    <property type="entry name" value="rpoC_TIGR"/>
    <property type="match status" value="1"/>
</dbReference>
<dbReference type="PANTHER" id="PTHR19376">
    <property type="entry name" value="DNA-DIRECTED RNA POLYMERASE"/>
    <property type="match status" value="1"/>
</dbReference>
<dbReference type="PANTHER" id="PTHR19376:SF54">
    <property type="entry name" value="DNA-DIRECTED RNA POLYMERASE SUBUNIT BETA"/>
    <property type="match status" value="1"/>
</dbReference>
<dbReference type="Pfam" id="PF04997">
    <property type="entry name" value="RNA_pol_Rpb1_1"/>
    <property type="match status" value="1"/>
</dbReference>
<dbReference type="Pfam" id="PF00623">
    <property type="entry name" value="RNA_pol_Rpb1_2"/>
    <property type="match status" value="2"/>
</dbReference>
<dbReference type="Pfam" id="PF04983">
    <property type="entry name" value="RNA_pol_Rpb1_3"/>
    <property type="match status" value="1"/>
</dbReference>
<dbReference type="Pfam" id="PF05000">
    <property type="entry name" value="RNA_pol_Rpb1_4"/>
    <property type="match status" value="1"/>
</dbReference>
<dbReference type="Pfam" id="PF04998">
    <property type="entry name" value="RNA_pol_Rpb1_5"/>
    <property type="match status" value="1"/>
</dbReference>
<dbReference type="SMART" id="SM00663">
    <property type="entry name" value="RPOLA_N"/>
    <property type="match status" value="1"/>
</dbReference>
<dbReference type="SUPFAM" id="SSF64484">
    <property type="entry name" value="beta and beta-prime subunits of DNA dependent RNA-polymerase"/>
    <property type="match status" value="1"/>
</dbReference>
<gene>
    <name evidence="1" type="primary">rpoC</name>
    <name type="ordered locus">Sama_0207</name>
</gene>
<name>RPOC_SHEAM</name>
<feature type="chain" id="PRO_0000353430" description="DNA-directed RNA polymerase subunit beta'">
    <location>
        <begin position="1"/>
        <end position="1404"/>
    </location>
</feature>
<feature type="binding site" evidence="1">
    <location>
        <position position="70"/>
    </location>
    <ligand>
        <name>Zn(2+)</name>
        <dbReference type="ChEBI" id="CHEBI:29105"/>
        <label>1</label>
    </ligand>
</feature>
<feature type="binding site" evidence="1">
    <location>
        <position position="72"/>
    </location>
    <ligand>
        <name>Zn(2+)</name>
        <dbReference type="ChEBI" id="CHEBI:29105"/>
        <label>1</label>
    </ligand>
</feature>
<feature type="binding site" evidence="1">
    <location>
        <position position="85"/>
    </location>
    <ligand>
        <name>Zn(2+)</name>
        <dbReference type="ChEBI" id="CHEBI:29105"/>
        <label>1</label>
    </ligand>
</feature>
<feature type="binding site" evidence="1">
    <location>
        <position position="88"/>
    </location>
    <ligand>
        <name>Zn(2+)</name>
        <dbReference type="ChEBI" id="CHEBI:29105"/>
        <label>1</label>
    </ligand>
</feature>
<feature type="binding site" evidence="1">
    <location>
        <position position="460"/>
    </location>
    <ligand>
        <name>Mg(2+)</name>
        <dbReference type="ChEBI" id="CHEBI:18420"/>
    </ligand>
</feature>
<feature type="binding site" evidence="1">
    <location>
        <position position="462"/>
    </location>
    <ligand>
        <name>Mg(2+)</name>
        <dbReference type="ChEBI" id="CHEBI:18420"/>
    </ligand>
</feature>
<feature type="binding site" evidence="1">
    <location>
        <position position="464"/>
    </location>
    <ligand>
        <name>Mg(2+)</name>
        <dbReference type="ChEBI" id="CHEBI:18420"/>
    </ligand>
</feature>
<feature type="binding site" evidence="1">
    <location>
        <position position="814"/>
    </location>
    <ligand>
        <name>Zn(2+)</name>
        <dbReference type="ChEBI" id="CHEBI:29105"/>
        <label>2</label>
    </ligand>
</feature>
<feature type="binding site" evidence="1">
    <location>
        <position position="888"/>
    </location>
    <ligand>
        <name>Zn(2+)</name>
        <dbReference type="ChEBI" id="CHEBI:29105"/>
        <label>2</label>
    </ligand>
</feature>
<feature type="binding site" evidence="1">
    <location>
        <position position="895"/>
    </location>
    <ligand>
        <name>Zn(2+)</name>
        <dbReference type="ChEBI" id="CHEBI:29105"/>
        <label>2</label>
    </ligand>
</feature>
<feature type="binding site" evidence="1">
    <location>
        <position position="898"/>
    </location>
    <ligand>
        <name>Zn(2+)</name>
        <dbReference type="ChEBI" id="CHEBI:29105"/>
        <label>2</label>
    </ligand>
</feature>
<sequence length="1404" mass="155271">MKDLLKFLKQQGKTEEFEGIKIGLASPDLIRSWSFGEVKKPETINYRTFKPEREGLFCARIFGPVKDYECLCGKYKRLKHRGVICEKCGVEVTQTKVRRERMGHIELASPVAHIWFLKSLPSRIGLMLDMTLRDIERVLYFESYVVIEPGMTSLERGQMLTEENYLDALEEYGDEFEAKMGAEAVLDLLRAIDLEKEIEQMREELPSINSETRRKKVTKRLKLIEAFYTSGNKPEWMILKVLPVLPPDLRPLVPLDGGRFATSDLNDLYRRVINRNNRLKRLLDLAAPDIIVRNEKRMLQESVDALLDNGRRGRAITGSNKRPLKSLADMIKGKQGRFRQNLLGKRVDYSGRSVITVGPTLRLHQCGLPKKMALELFKPFIYGKLEGRGLATTIKAAKKMVEREVAEVWDVLDEVIREHPVMLNRAPTLHRLGIQAFEPVLIEGKAIQLHPLVCAAYNADFDGDQMAVHVPLTLEAQLEARALMMSTNNILSPANGEPIIVPSQDVVLGLYYISRERVNGRGEAMAFESVAEAEKAYRVGAAELHARVKVRITETIIGENGERTKQRRIVDTTVGRAILSQILPAGLSFDLVNQDMGKKQISKLLNTCYRQLGLKDTVIFADQLMYTGFQYATISGASVGINDMVIPEEKYSLVADAEAEVIEIQEQFQSGLVTAGERYNKVIDIWASANEKVSKAMMENLSSETVINRHGEEEKQKSFNSIYMMADSGARGSAAQIRQLAGMRGLMAKPDGSIIETPIVANFREGLNVLQYFISTHGARKGLADTALKTANSGYLTRRLVDVAQDLVIIEDDCGATEGLSMKPLIEGGDVVEPLRERVLGRVVAEDVMYPGTDEVLAPRNTLLDEAWCDKLEQHSVDEVQVRSVITCETDFGVCAKCYGRDLARGHIINMGEAIGVVAAQSIGEPGTQLTMRTFHIGGAASRASAENSVQVKNAGTLKLHNAKYVTNSDGKLVIVSRSSELAIIDELGREKERYKVPYGTVLDTKEGAEVNAGQIIANWDPHTHPIITEVAGSIKFVDMIDGVTITRQTDELTGLSSIVVLDVGQRTSAGKEMRPAVRLVDDNGNDLTIPGTDVPAQYFLPGNAIVNLDDNAKISVGDALARIPQESSKTRDITGGLPRVADLFEARRPKEPAILAEISGTISFGKETKGKRRLVITPNDGGDAYEEMIPKWRNLNVFEGEKVERGEVIADGPESAHDILRLRGIHNVANYIVNEVQDVYRLQGVKINDKHIEVIIRQMLRKCIITQAGDSEFLEGEQVEVARVKIANRDLEAAGKQPAKFERELLGITKASLATESFISAASFQETTRVLTEAAVGGKSDNLRGLKENVIVGRLIPAGTGFAYHKNRAKARASGEETAAPTITASEAEQNLADLLNLAGSQE</sequence>
<accession>A1S212</accession>
<comment type="function">
    <text evidence="1">DNA-dependent RNA polymerase catalyzes the transcription of DNA into RNA using the four ribonucleoside triphosphates as substrates.</text>
</comment>
<comment type="catalytic activity">
    <reaction evidence="1">
        <text>RNA(n) + a ribonucleoside 5'-triphosphate = RNA(n+1) + diphosphate</text>
        <dbReference type="Rhea" id="RHEA:21248"/>
        <dbReference type="Rhea" id="RHEA-COMP:14527"/>
        <dbReference type="Rhea" id="RHEA-COMP:17342"/>
        <dbReference type="ChEBI" id="CHEBI:33019"/>
        <dbReference type="ChEBI" id="CHEBI:61557"/>
        <dbReference type="ChEBI" id="CHEBI:140395"/>
        <dbReference type="EC" id="2.7.7.6"/>
    </reaction>
</comment>
<comment type="cofactor">
    <cofactor evidence="1">
        <name>Mg(2+)</name>
        <dbReference type="ChEBI" id="CHEBI:18420"/>
    </cofactor>
    <text evidence="1">Binds 1 Mg(2+) ion per subunit.</text>
</comment>
<comment type="cofactor">
    <cofactor evidence="1">
        <name>Zn(2+)</name>
        <dbReference type="ChEBI" id="CHEBI:29105"/>
    </cofactor>
    <text evidence="1">Binds 2 Zn(2+) ions per subunit.</text>
</comment>
<comment type="subunit">
    <text evidence="1">The RNAP catalytic core consists of 2 alpha, 1 beta, 1 beta' and 1 omega subunit. When a sigma factor is associated with the core the holoenzyme is formed, which can initiate transcription.</text>
</comment>
<comment type="similarity">
    <text evidence="1">Belongs to the RNA polymerase beta' chain family.</text>
</comment>
<evidence type="ECO:0000255" key="1">
    <source>
        <dbReference type="HAMAP-Rule" id="MF_01322"/>
    </source>
</evidence>
<organism>
    <name type="scientific">Shewanella amazonensis (strain ATCC BAA-1098 / SB2B)</name>
    <dbReference type="NCBI Taxonomy" id="326297"/>
    <lineage>
        <taxon>Bacteria</taxon>
        <taxon>Pseudomonadati</taxon>
        <taxon>Pseudomonadota</taxon>
        <taxon>Gammaproteobacteria</taxon>
        <taxon>Alteromonadales</taxon>
        <taxon>Shewanellaceae</taxon>
        <taxon>Shewanella</taxon>
    </lineage>
</organism>